<feature type="chain" id="PRO_1000114486" description="V-type ATP synthase subunit D">
    <location>
        <begin position="1"/>
        <end position="208"/>
    </location>
</feature>
<name>VATD_STRPZ</name>
<gene>
    <name evidence="1" type="primary">atpD</name>
    <name type="ordered locus">Spy49_0137</name>
</gene>
<dbReference type="EMBL" id="CP000829">
    <property type="protein sequence ID" value="ACI60487.1"/>
    <property type="molecule type" value="Genomic_DNA"/>
</dbReference>
<dbReference type="SMR" id="B5XJH5"/>
<dbReference type="KEGG" id="soz:Spy49_0137"/>
<dbReference type="HOGENOM" id="CLU_069688_2_1_9"/>
<dbReference type="Proteomes" id="UP000001039">
    <property type="component" value="Chromosome"/>
</dbReference>
<dbReference type="GO" id="GO:0005524">
    <property type="term" value="F:ATP binding"/>
    <property type="evidence" value="ECO:0007669"/>
    <property type="project" value="UniProtKB-UniRule"/>
</dbReference>
<dbReference type="GO" id="GO:0046933">
    <property type="term" value="F:proton-transporting ATP synthase activity, rotational mechanism"/>
    <property type="evidence" value="ECO:0007669"/>
    <property type="project" value="UniProtKB-UniRule"/>
</dbReference>
<dbReference type="GO" id="GO:0046961">
    <property type="term" value="F:proton-transporting ATPase activity, rotational mechanism"/>
    <property type="evidence" value="ECO:0007669"/>
    <property type="project" value="InterPro"/>
</dbReference>
<dbReference type="GO" id="GO:0042777">
    <property type="term" value="P:proton motive force-driven plasma membrane ATP synthesis"/>
    <property type="evidence" value="ECO:0007669"/>
    <property type="project" value="UniProtKB-UniRule"/>
</dbReference>
<dbReference type="FunFam" id="1.10.287.3240:FF:000007">
    <property type="entry name" value="V-type ATP synthase subunit D"/>
    <property type="match status" value="1"/>
</dbReference>
<dbReference type="Gene3D" id="1.10.287.3240">
    <property type="match status" value="1"/>
</dbReference>
<dbReference type="HAMAP" id="MF_00271">
    <property type="entry name" value="ATP_synth_D_arch"/>
    <property type="match status" value="1"/>
</dbReference>
<dbReference type="InterPro" id="IPR002699">
    <property type="entry name" value="V_ATPase_D"/>
</dbReference>
<dbReference type="NCBIfam" id="NF001546">
    <property type="entry name" value="PRK00373.1-5"/>
    <property type="match status" value="1"/>
</dbReference>
<dbReference type="NCBIfam" id="TIGR00309">
    <property type="entry name" value="V_ATPase_subD"/>
    <property type="match status" value="1"/>
</dbReference>
<dbReference type="PANTHER" id="PTHR11671">
    <property type="entry name" value="V-TYPE ATP SYNTHASE SUBUNIT D"/>
    <property type="match status" value="1"/>
</dbReference>
<dbReference type="Pfam" id="PF01813">
    <property type="entry name" value="ATP-synt_D"/>
    <property type="match status" value="1"/>
</dbReference>
<proteinExistence type="inferred from homology"/>
<protein>
    <recommendedName>
        <fullName evidence="1">V-type ATP synthase subunit D</fullName>
    </recommendedName>
    <alternativeName>
        <fullName evidence="1">V-ATPase subunit D</fullName>
    </alternativeName>
</protein>
<reference key="1">
    <citation type="journal article" date="2008" name="J. Bacteriol.">
        <title>Genome sequence of a nephritogenic and highly transformable M49 strain of Streptococcus pyogenes.</title>
        <authorList>
            <person name="McShan W.M."/>
            <person name="Ferretti J.J."/>
            <person name="Karasawa T."/>
            <person name="Suvorov A.N."/>
            <person name="Lin S."/>
            <person name="Qin B."/>
            <person name="Jia H."/>
            <person name="Kenton S."/>
            <person name="Najar F."/>
            <person name="Wu H."/>
            <person name="Scott J."/>
            <person name="Roe B.A."/>
            <person name="Savic D.J."/>
        </authorList>
    </citation>
    <scope>NUCLEOTIDE SEQUENCE [LARGE SCALE GENOMIC DNA]</scope>
    <source>
        <strain>NZ131</strain>
    </source>
</reference>
<organism>
    <name type="scientific">Streptococcus pyogenes serotype M49 (strain NZ131)</name>
    <dbReference type="NCBI Taxonomy" id="471876"/>
    <lineage>
        <taxon>Bacteria</taxon>
        <taxon>Bacillati</taxon>
        <taxon>Bacillota</taxon>
        <taxon>Bacilli</taxon>
        <taxon>Lactobacillales</taxon>
        <taxon>Streptococcaceae</taxon>
        <taxon>Streptococcus</taxon>
    </lineage>
</organism>
<sequence>MARLNVKPTRMELSNLKNRLKTATRGHKLLKDKRDELMRRFVDLIRENNELRQTIEKELAANMKEFVLAKASENSLMVEELFAVPVHEVTLWIDIENIMSVNVPKFHVQSNTAREQEQGEFAYSYLSSNSEMDNTIQKTKELLEKLLRLAEVEKTCQLMADDIEKTRRRVNGLEYSIIPQLEETIHYIELKLEEAERASLVRIMKITS</sequence>
<keyword id="KW-0066">ATP synthesis</keyword>
<keyword id="KW-0375">Hydrogen ion transport</keyword>
<keyword id="KW-0406">Ion transport</keyword>
<keyword id="KW-0813">Transport</keyword>
<comment type="function">
    <text evidence="1">Produces ATP from ADP in the presence of a proton gradient across the membrane.</text>
</comment>
<comment type="similarity">
    <text evidence="1">Belongs to the V-ATPase D subunit family.</text>
</comment>
<accession>B5XJH5</accession>
<evidence type="ECO:0000255" key="1">
    <source>
        <dbReference type="HAMAP-Rule" id="MF_00271"/>
    </source>
</evidence>